<proteinExistence type="evidence at protein level"/>
<name>ALL2_CANLF</name>
<sequence>MQLLLLTVGLALICGLQAQEGNHEEPQGGLEELSGRWHSVALASNKSDLIKPWGHFRVFIHSMSAKDGNLHGDILIPQDGQCEKVSLTAFKTATSNKFDLEYWGHNDLYLAEVDPKSYLILYMINQYNDDTSLVAHLMVRDLSRQQDFLPAFESVCEDIGLHKDQIVVLSDDDRCQGSRD</sequence>
<evidence type="ECO:0000255" key="1"/>
<evidence type="ECO:0000269" key="2">
    <source>
    </source>
</evidence>
<evidence type="ECO:0000269" key="3">
    <source>
    </source>
</evidence>
<evidence type="ECO:0000305" key="4"/>
<evidence type="ECO:0007829" key="5">
    <source>
        <dbReference type="PDB" id="3L4R"/>
    </source>
</evidence>
<feature type="signal peptide" evidence="1">
    <location>
        <begin position="1"/>
        <end position="18"/>
    </location>
</feature>
<feature type="chain" id="PRO_0000017981" description="Minor allergen Can f 2">
    <location>
        <begin position="19"/>
        <end position="180"/>
    </location>
</feature>
<feature type="glycosylation site" description="N-linked (GlcNAc...) asparagine" evidence="1">
    <location>
        <position position="45"/>
    </location>
</feature>
<feature type="disulfide bond" evidence="2">
    <location>
        <begin position="82"/>
        <end position="175"/>
    </location>
</feature>
<feature type="helix" evidence="5">
    <location>
        <begin position="30"/>
        <end position="33"/>
    </location>
</feature>
<feature type="strand" evidence="5">
    <location>
        <begin position="38"/>
        <end position="46"/>
    </location>
</feature>
<feature type="helix" evidence="5">
    <location>
        <begin position="47"/>
        <end position="49"/>
    </location>
</feature>
<feature type="strand" evidence="5">
    <location>
        <begin position="59"/>
        <end position="66"/>
    </location>
</feature>
<feature type="strand" evidence="5">
    <location>
        <begin position="69"/>
        <end position="77"/>
    </location>
</feature>
<feature type="strand" evidence="5">
    <location>
        <begin position="79"/>
        <end position="91"/>
    </location>
</feature>
<feature type="strand" evidence="5">
    <location>
        <begin position="97"/>
        <end position="114"/>
    </location>
</feature>
<feature type="turn" evidence="5">
    <location>
        <begin position="115"/>
        <end position="117"/>
    </location>
</feature>
<feature type="strand" evidence="5">
    <location>
        <begin position="118"/>
        <end position="127"/>
    </location>
</feature>
<feature type="strand" evidence="5">
    <location>
        <begin position="130"/>
        <end position="140"/>
    </location>
</feature>
<feature type="helix" evidence="5">
    <location>
        <begin position="142"/>
        <end position="144"/>
    </location>
</feature>
<feature type="turn" evidence="5">
    <location>
        <begin position="145"/>
        <end position="148"/>
    </location>
</feature>
<feature type="helix" evidence="5">
    <location>
        <begin position="149"/>
        <end position="158"/>
    </location>
</feature>
<feature type="helix" evidence="5">
    <location>
        <begin position="163"/>
        <end position="165"/>
    </location>
</feature>
<feature type="strand" evidence="5">
    <location>
        <begin position="166"/>
        <end position="168"/>
    </location>
</feature>
<feature type="turn" evidence="5">
    <location>
        <begin position="171"/>
        <end position="173"/>
    </location>
</feature>
<reference key="1">
    <citation type="journal article" date="1997" name="Immunology">
        <title>The major dog allergens, Can f 1 and Can f 2, are salivary lipocalin proteins: cloning and immunological characterization of the recombinant forms.</title>
        <authorList>
            <person name="Konieczny A."/>
            <person name="Morgenstern J.P."/>
            <person name="Bizinkauskas C.B."/>
            <person name="Lilley C.H."/>
            <person name="Brauer A.W."/>
            <person name="Bond J.F."/>
            <person name="Aalberse R.C."/>
            <person name="Wallner B.P."/>
            <person name="Kasaian M.T."/>
        </authorList>
    </citation>
    <scope>NUCLEOTIDE SEQUENCE [MRNA]</scope>
    <scope>ALLERGEN</scope>
</reference>
<reference key="2">
    <citation type="journal article" date="2010" name="J. Mol. Biol.">
        <title>Crystal structure of the dog lipocalin allergen Can f 2: implications for cross-reactivity to the cat allergen Fel d 4.</title>
        <authorList>
            <person name="Madhurantakam C."/>
            <person name="Nilsson O.B."/>
            <person name="Uchtenhagen H."/>
            <person name="Konradsen J."/>
            <person name="Saarne T."/>
            <person name="Hogbom E."/>
            <person name="Sandalova T."/>
            <person name="Gronlund H."/>
            <person name="Achour A."/>
        </authorList>
    </citation>
    <scope>X-RAY CRYSTALLOGRAPHY (1.45 ANGSTROMS) OF 20-180</scope>
    <scope>DISULFIDE BOND</scope>
</reference>
<protein>
    <recommendedName>
        <fullName>Minor allergen Can f 2</fullName>
    </recommendedName>
    <alternativeName>
        <fullName>Allergen Dog 2</fullName>
    </alternativeName>
    <allergenName>Can f 2</allergenName>
</protein>
<comment type="subcellular location">
    <subcellularLocation>
        <location>Secreted</location>
    </subcellularLocation>
</comment>
<comment type="tissue specificity">
    <text>Tongue epithelial tissue and parotid gland.</text>
</comment>
<comment type="allergen">
    <text evidence="3">Causes an allergic reaction in human.</text>
</comment>
<comment type="similarity">
    <text evidence="4">Belongs to the calycin superfamily. Lipocalin family.</text>
</comment>
<organism>
    <name type="scientific">Canis lupus familiaris</name>
    <name type="common">Dog</name>
    <name type="synonym">Canis familiaris</name>
    <dbReference type="NCBI Taxonomy" id="9615"/>
    <lineage>
        <taxon>Eukaryota</taxon>
        <taxon>Metazoa</taxon>
        <taxon>Chordata</taxon>
        <taxon>Craniata</taxon>
        <taxon>Vertebrata</taxon>
        <taxon>Euteleostomi</taxon>
        <taxon>Mammalia</taxon>
        <taxon>Eutheria</taxon>
        <taxon>Laurasiatheria</taxon>
        <taxon>Carnivora</taxon>
        <taxon>Caniformia</taxon>
        <taxon>Canidae</taxon>
        <taxon>Canis</taxon>
    </lineage>
</organism>
<dbReference type="EMBL" id="AF027178">
    <property type="protein sequence ID" value="AAC48795.1"/>
    <property type="molecule type" value="mRNA"/>
</dbReference>
<dbReference type="RefSeq" id="NP_001003189.1">
    <property type="nucleotide sequence ID" value="NM_001003189.2"/>
</dbReference>
<dbReference type="PDB" id="3L4R">
    <property type="method" value="X-ray"/>
    <property type="resolution" value="1.45 A"/>
    <property type="chains" value="A=20-180"/>
</dbReference>
<dbReference type="PDBsum" id="3L4R"/>
<dbReference type="SMR" id="O18874"/>
<dbReference type="Allergome" id="175">
    <property type="allergen name" value="Can f 2"/>
</dbReference>
<dbReference type="Allergome" id="3170">
    <property type="allergen name" value="Can f 2.0101"/>
</dbReference>
<dbReference type="PaxDb" id="9612-ENSCAFP00000029233"/>
<dbReference type="Ensembl" id="ENSCAFT00000031406.4">
    <property type="protein sequence ID" value="ENSCAFP00000029233.2"/>
    <property type="gene ID" value="ENSCAFG00000019749.4"/>
</dbReference>
<dbReference type="Ensembl" id="ENSCAFT00040001182.1">
    <property type="protein sequence ID" value="ENSCAFP00040001004.1"/>
    <property type="gene ID" value="ENSCAFG00040000664.1"/>
</dbReference>
<dbReference type="Ensembl" id="ENSCAFT00845015896.1">
    <property type="protein sequence ID" value="ENSCAFP00845012369.1"/>
    <property type="gene ID" value="ENSCAFG00845008996.1"/>
</dbReference>
<dbReference type="GeneID" id="403829"/>
<dbReference type="KEGG" id="cfa:403829"/>
<dbReference type="CTD" id="403829"/>
<dbReference type="VEuPathDB" id="HostDB:ENSCAFG00845008996"/>
<dbReference type="eggNOG" id="ENOG502TJKQ">
    <property type="taxonomic scope" value="Eukaryota"/>
</dbReference>
<dbReference type="GeneTree" id="ENSGT01050000244868"/>
<dbReference type="HOGENOM" id="CLU_094061_4_0_1"/>
<dbReference type="InParanoid" id="O18874"/>
<dbReference type="OMA" id="GRYTFEY"/>
<dbReference type="OrthoDB" id="29550at33554"/>
<dbReference type="TreeFam" id="TF338197"/>
<dbReference type="EvolutionaryTrace" id="O18874"/>
<dbReference type="Proteomes" id="UP000002254">
    <property type="component" value="Chromosome 9"/>
</dbReference>
<dbReference type="Proteomes" id="UP000694429">
    <property type="component" value="Unplaced"/>
</dbReference>
<dbReference type="Proteomes" id="UP000694542">
    <property type="component" value="Chromosome 9"/>
</dbReference>
<dbReference type="Proteomes" id="UP000805418">
    <property type="component" value="Chromosome 9"/>
</dbReference>
<dbReference type="Bgee" id="ENSCAFG00000019749">
    <property type="expression patterns" value="Expressed in saliva-secreting gland and 9 other cell types or tissues"/>
</dbReference>
<dbReference type="GO" id="GO:0005615">
    <property type="term" value="C:extracellular space"/>
    <property type="evidence" value="ECO:0000318"/>
    <property type="project" value="GO_Central"/>
</dbReference>
<dbReference type="GO" id="GO:0005549">
    <property type="term" value="F:odorant binding"/>
    <property type="evidence" value="ECO:0000318"/>
    <property type="project" value="GO_Central"/>
</dbReference>
<dbReference type="GO" id="GO:0036094">
    <property type="term" value="F:small molecule binding"/>
    <property type="evidence" value="ECO:0007669"/>
    <property type="project" value="InterPro"/>
</dbReference>
<dbReference type="CDD" id="cd19431">
    <property type="entry name" value="lipocalin_Can_f_2"/>
    <property type="match status" value="1"/>
</dbReference>
<dbReference type="Gene3D" id="2.40.128.20">
    <property type="match status" value="1"/>
</dbReference>
<dbReference type="InterPro" id="IPR012674">
    <property type="entry name" value="Calycin"/>
</dbReference>
<dbReference type="InterPro" id="IPR002345">
    <property type="entry name" value="Lipocalin"/>
</dbReference>
<dbReference type="InterPro" id="IPR022272">
    <property type="entry name" value="Lipocalin_CS"/>
</dbReference>
<dbReference type="InterPro" id="IPR000566">
    <property type="entry name" value="Lipocln_cytosolic_FA-bd_dom"/>
</dbReference>
<dbReference type="InterPro" id="IPR002971">
    <property type="entry name" value="Maj_urinary"/>
</dbReference>
<dbReference type="PANTHER" id="PTHR11430">
    <property type="entry name" value="LIPOCALIN"/>
    <property type="match status" value="1"/>
</dbReference>
<dbReference type="PANTHER" id="PTHR11430:SF76">
    <property type="entry name" value="MAJOR URINARY PROTEIN 1-RELATED"/>
    <property type="match status" value="1"/>
</dbReference>
<dbReference type="Pfam" id="PF00061">
    <property type="entry name" value="Lipocalin"/>
    <property type="match status" value="1"/>
</dbReference>
<dbReference type="PRINTS" id="PR01221">
    <property type="entry name" value="MAJORURINARY"/>
</dbReference>
<dbReference type="SUPFAM" id="SSF50814">
    <property type="entry name" value="Lipocalins"/>
    <property type="match status" value="1"/>
</dbReference>
<dbReference type="PROSITE" id="PS00213">
    <property type="entry name" value="LIPOCALIN"/>
    <property type="match status" value="1"/>
</dbReference>
<accession>O18874</accession>
<keyword id="KW-0002">3D-structure</keyword>
<keyword id="KW-0020">Allergen</keyword>
<keyword id="KW-1015">Disulfide bond</keyword>
<keyword id="KW-0325">Glycoprotein</keyword>
<keyword id="KW-1185">Reference proteome</keyword>
<keyword id="KW-0964">Secreted</keyword>
<keyword id="KW-0732">Signal</keyword>
<keyword id="KW-0813">Transport</keyword>